<proteinExistence type="inferred from homology"/>
<protein>
    <recommendedName>
        <fullName evidence="1">2-isopropylmalate synthase</fullName>
        <ecNumber evidence="1">2.3.3.13</ecNumber>
    </recommendedName>
    <alternativeName>
        <fullName evidence="1">Alpha-IPM synthase</fullName>
    </alternativeName>
    <alternativeName>
        <fullName evidence="1">Alpha-isopropylmalate synthase</fullName>
    </alternativeName>
</protein>
<feature type="chain" id="PRO_1000149274" description="2-isopropylmalate synthase">
    <location>
        <begin position="1"/>
        <end position="523"/>
    </location>
</feature>
<feature type="domain" description="Pyruvate carboxyltransferase" evidence="1">
    <location>
        <begin position="5"/>
        <end position="267"/>
    </location>
</feature>
<feature type="region of interest" description="Regulatory domain" evidence="1">
    <location>
        <begin position="392"/>
        <end position="523"/>
    </location>
</feature>
<feature type="binding site" evidence="1">
    <location>
        <position position="14"/>
    </location>
    <ligand>
        <name>Mn(2+)</name>
        <dbReference type="ChEBI" id="CHEBI:29035"/>
    </ligand>
</feature>
<feature type="binding site" evidence="1">
    <location>
        <position position="202"/>
    </location>
    <ligand>
        <name>Mn(2+)</name>
        <dbReference type="ChEBI" id="CHEBI:29035"/>
    </ligand>
</feature>
<feature type="binding site" evidence="1">
    <location>
        <position position="204"/>
    </location>
    <ligand>
        <name>Mn(2+)</name>
        <dbReference type="ChEBI" id="CHEBI:29035"/>
    </ligand>
</feature>
<feature type="binding site" evidence="1">
    <location>
        <position position="238"/>
    </location>
    <ligand>
        <name>Mn(2+)</name>
        <dbReference type="ChEBI" id="CHEBI:29035"/>
    </ligand>
</feature>
<evidence type="ECO:0000255" key="1">
    <source>
        <dbReference type="HAMAP-Rule" id="MF_01025"/>
    </source>
</evidence>
<organism>
    <name type="scientific">Salmonella paratyphi A (strain AKU_12601)</name>
    <dbReference type="NCBI Taxonomy" id="554290"/>
    <lineage>
        <taxon>Bacteria</taxon>
        <taxon>Pseudomonadati</taxon>
        <taxon>Pseudomonadota</taxon>
        <taxon>Gammaproteobacteria</taxon>
        <taxon>Enterobacterales</taxon>
        <taxon>Enterobacteriaceae</taxon>
        <taxon>Salmonella</taxon>
    </lineage>
</organism>
<sequence length="523" mass="57463">MSQQVIIFDTTLRDGEQALQASLSAKEKLQIALALERMGVDVMEVGFPVSSPGDFESVQTIARTIKNSRVCALARCVEKDIDVAAQALKVADAFRIHTFIATSPMHIATKLRSTLDEVIERAVYMVKRARNYTDDVEFSCEDAGRTPVDDLARVVEAAINAGARTINIPDTVGYTMPFEFAGIISGLYERVPNIDKAIISVHTHDDLGIAVGNSLAAVHAGARQVEGAMNGIGERAGNCALEEVIMAIKVRKDIMNVHTNINHHEIWRTSQTVSQICNMPIPANKAIVGSGAFAHSSGIHQDGVLKNRENYEIMTPESIGLNQIQLNLTSRSGRAAVKHRMEEMGYKDTDYNMDHLYDAFLKLADKKGQVFDYDLEALAFINKQQEEPEHFRLDYFSVQSGSSDIATASVKLACGEEIKAEAANGNGPVDAIYQAINRITGYDVELVKYDLNAKGQGKDALGQVDIVVNHHGRRFHGVGLATDIVESSAKAMMHVLNNIWRAAEVEKELQRKAQNKENNKETV</sequence>
<reference key="1">
    <citation type="journal article" date="2009" name="BMC Genomics">
        <title>Pseudogene accumulation in the evolutionary histories of Salmonella enterica serovars Paratyphi A and Typhi.</title>
        <authorList>
            <person name="Holt K.E."/>
            <person name="Thomson N.R."/>
            <person name="Wain J."/>
            <person name="Langridge G.C."/>
            <person name="Hasan R."/>
            <person name="Bhutta Z.A."/>
            <person name="Quail M.A."/>
            <person name="Norbertczak H."/>
            <person name="Walker D."/>
            <person name="Simmonds M."/>
            <person name="White B."/>
            <person name="Bason N."/>
            <person name="Mungall K."/>
            <person name="Dougan G."/>
            <person name="Parkhill J."/>
        </authorList>
    </citation>
    <scope>NUCLEOTIDE SEQUENCE [LARGE SCALE GENOMIC DNA]</scope>
    <source>
        <strain>AKU_12601</strain>
    </source>
</reference>
<dbReference type="EC" id="2.3.3.13" evidence="1"/>
<dbReference type="EMBL" id="FM200053">
    <property type="protein sequence ID" value="CAR58222.1"/>
    <property type="molecule type" value="Genomic_DNA"/>
</dbReference>
<dbReference type="RefSeq" id="WP_000082817.1">
    <property type="nucleotide sequence ID" value="NC_011147.1"/>
</dbReference>
<dbReference type="SMR" id="B5BLB5"/>
<dbReference type="KEGG" id="sek:SSPA0111"/>
<dbReference type="HOGENOM" id="CLU_022158_0_1_6"/>
<dbReference type="UniPathway" id="UPA00048">
    <property type="reaction ID" value="UER00070"/>
</dbReference>
<dbReference type="Proteomes" id="UP000001869">
    <property type="component" value="Chromosome"/>
</dbReference>
<dbReference type="GO" id="GO:0005829">
    <property type="term" value="C:cytosol"/>
    <property type="evidence" value="ECO:0007669"/>
    <property type="project" value="TreeGrafter"/>
</dbReference>
<dbReference type="GO" id="GO:0003852">
    <property type="term" value="F:2-isopropylmalate synthase activity"/>
    <property type="evidence" value="ECO:0007669"/>
    <property type="project" value="UniProtKB-UniRule"/>
</dbReference>
<dbReference type="GO" id="GO:0003985">
    <property type="term" value="F:acetyl-CoA C-acetyltransferase activity"/>
    <property type="evidence" value="ECO:0007669"/>
    <property type="project" value="UniProtKB-UniRule"/>
</dbReference>
<dbReference type="GO" id="GO:0030145">
    <property type="term" value="F:manganese ion binding"/>
    <property type="evidence" value="ECO:0007669"/>
    <property type="project" value="UniProtKB-UniRule"/>
</dbReference>
<dbReference type="GO" id="GO:0009098">
    <property type="term" value="P:L-leucine biosynthetic process"/>
    <property type="evidence" value="ECO:0007669"/>
    <property type="project" value="UniProtKB-UniRule"/>
</dbReference>
<dbReference type="CDD" id="cd07940">
    <property type="entry name" value="DRE_TIM_IPMS"/>
    <property type="match status" value="1"/>
</dbReference>
<dbReference type="FunFam" id="1.10.238.260:FF:000001">
    <property type="entry name" value="2-isopropylmalate synthase"/>
    <property type="match status" value="1"/>
</dbReference>
<dbReference type="FunFam" id="3.20.20.70:FF:000010">
    <property type="entry name" value="2-isopropylmalate synthase"/>
    <property type="match status" value="1"/>
</dbReference>
<dbReference type="FunFam" id="3.30.160.270:FF:000001">
    <property type="entry name" value="2-isopropylmalate synthase"/>
    <property type="match status" value="1"/>
</dbReference>
<dbReference type="Gene3D" id="1.10.238.260">
    <property type="match status" value="1"/>
</dbReference>
<dbReference type="Gene3D" id="3.30.160.270">
    <property type="match status" value="1"/>
</dbReference>
<dbReference type="Gene3D" id="3.20.20.70">
    <property type="entry name" value="Aldolase class I"/>
    <property type="match status" value="1"/>
</dbReference>
<dbReference type="HAMAP" id="MF_01025">
    <property type="entry name" value="LeuA_type1"/>
    <property type="match status" value="1"/>
</dbReference>
<dbReference type="InterPro" id="IPR050073">
    <property type="entry name" value="2-IPM_HCS-like"/>
</dbReference>
<dbReference type="InterPro" id="IPR013709">
    <property type="entry name" value="2-isopropylmalate_synth_dimer"/>
</dbReference>
<dbReference type="InterPro" id="IPR002034">
    <property type="entry name" value="AIPM/Hcit_synth_CS"/>
</dbReference>
<dbReference type="InterPro" id="IPR013785">
    <property type="entry name" value="Aldolase_TIM"/>
</dbReference>
<dbReference type="InterPro" id="IPR054691">
    <property type="entry name" value="LeuA/HCS_post-cat"/>
</dbReference>
<dbReference type="InterPro" id="IPR036230">
    <property type="entry name" value="LeuA_allosteric_dom_sf"/>
</dbReference>
<dbReference type="InterPro" id="IPR005671">
    <property type="entry name" value="LeuA_bact_synth"/>
</dbReference>
<dbReference type="InterPro" id="IPR000891">
    <property type="entry name" value="PYR_CT"/>
</dbReference>
<dbReference type="NCBIfam" id="TIGR00973">
    <property type="entry name" value="leuA_bact"/>
    <property type="match status" value="1"/>
</dbReference>
<dbReference type="NCBIfam" id="NF002084">
    <property type="entry name" value="PRK00915.1-1"/>
    <property type="match status" value="1"/>
</dbReference>
<dbReference type="NCBIfam" id="NF002086">
    <property type="entry name" value="PRK00915.1-3"/>
    <property type="match status" value="1"/>
</dbReference>
<dbReference type="PANTHER" id="PTHR10277:SF9">
    <property type="entry name" value="2-ISOPROPYLMALATE SYNTHASE 1, CHLOROPLASTIC-RELATED"/>
    <property type="match status" value="1"/>
</dbReference>
<dbReference type="PANTHER" id="PTHR10277">
    <property type="entry name" value="HOMOCITRATE SYNTHASE-RELATED"/>
    <property type="match status" value="1"/>
</dbReference>
<dbReference type="Pfam" id="PF22617">
    <property type="entry name" value="HCS_D2"/>
    <property type="match status" value="1"/>
</dbReference>
<dbReference type="Pfam" id="PF00682">
    <property type="entry name" value="HMGL-like"/>
    <property type="match status" value="1"/>
</dbReference>
<dbReference type="Pfam" id="PF08502">
    <property type="entry name" value="LeuA_dimer"/>
    <property type="match status" value="1"/>
</dbReference>
<dbReference type="SMART" id="SM00917">
    <property type="entry name" value="LeuA_dimer"/>
    <property type="match status" value="1"/>
</dbReference>
<dbReference type="SUPFAM" id="SSF110921">
    <property type="entry name" value="2-isopropylmalate synthase LeuA, allosteric (dimerisation) domain"/>
    <property type="match status" value="1"/>
</dbReference>
<dbReference type="SUPFAM" id="SSF51569">
    <property type="entry name" value="Aldolase"/>
    <property type="match status" value="1"/>
</dbReference>
<dbReference type="PROSITE" id="PS00815">
    <property type="entry name" value="AIPM_HOMOCIT_SYNTH_1"/>
    <property type="match status" value="1"/>
</dbReference>
<dbReference type="PROSITE" id="PS00816">
    <property type="entry name" value="AIPM_HOMOCIT_SYNTH_2"/>
    <property type="match status" value="1"/>
</dbReference>
<dbReference type="PROSITE" id="PS50991">
    <property type="entry name" value="PYR_CT"/>
    <property type="match status" value="1"/>
</dbReference>
<comment type="function">
    <text evidence="1">Catalyzes the condensation of the acetyl group of acetyl-CoA with 3-methyl-2-oxobutanoate (2-ketoisovalerate) to form 3-carboxy-3-hydroxy-4-methylpentanoate (2-isopropylmalate).</text>
</comment>
<comment type="catalytic activity">
    <reaction evidence="1">
        <text>3-methyl-2-oxobutanoate + acetyl-CoA + H2O = (2S)-2-isopropylmalate + CoA + H(+)</text>
        <dbReference type="Rhea" id="RHEA:21524"/>
        <dbReference type="ChEBI" id="CHEBI:1178"/>
        <dbReference type="ChEBI" id="CHEBI:11851"/>
        <dbReference type="ChEBI" id="CHEBI:15377"/>
        <dbReference type="ChEBI" id="CHEBI:15378"/>
        <dbReference type="ChEBI" id="CHEBI:57287"/>
        <dbReference type="ChEBI" id="CHEBI:57288"/>
        <dbReference type="EC" id="2.3.3.13"/>
    </reaction>
</comment>
<comment type="cofactor">
    <cofactor evidence="1">
        <name>Mn(2+)</name>
        <dbReference type="ChEBI" id="CHEBI:29035"/>
    </cofactor>
</comment>
<comment type="pathway">
    <text evidence="1">Amino-acid biosynthesis; L-leucine biosynthesis; L-leucine from 3-methyl-2-oxobutanoate: step 1/4.</text>
</comment>
<comment type="subunit">
    <text evidence="1">Homodimer.</text>
</comment>
<comment type="subcellular location">
    <subcellularLocation>
        <location evidence="1">Cytoplasm</location>
    </subcellularLocation>
</comment>
<comment type="similarity">
    <text evidence="1">Belongs to the alpha-IPM synthase/homocitrate synthase family. LeuA type 1 subfamily.</text>
</comment>
<name>LEU1_SALPK</name>
<keyword id="KW-0028">Amino-acid biosynthesis</keyword>
<keyword id="KW-0100">Branched-chain amino acid biosynthesis</keyword>
<keyword id="KW-0963">Cytoplasm</keyword>
<keyword id="KW-0432">Leucine biosynthesis</keyword>
<keyword id="KW-0464">Manganese</keyword>
<keyword id="KW-0479">Metal-binding</keyword>
<keyword id="KW-0808">Transferase</keyword>
<gene>
    <name evidence="1" type="primary">leuA</name>
    <name type="ordered locus">SSPA0111</name>
</gene>
<accession>B5BLB5</accession>